<evidence type="ECO:0000255" key="1">
    <source>
        <dbReference type="HAMAP-Rule" id="MF_00186"/>
    </source>
</evidence>
<keyword id="KW-0067">ATP-binding</keyword>
<keyword id="KW-0319">Glycerol metabolism</keyword>
<keyword id="KW-0418">Kinase</keyword>
<keyword id="KW-0547">Nucleotide-binding</keyword>
<keyword id="KW-1185">Reference proteome</keyword>
<keyword id="KW-0808">Transferase</keyword>
<accession>A1VJ23</accession>
<proteinExistence type="inferred from homology"/>
<organism>
    <name type="scientific">Polaromonas naphthalenivorans (strain CJ2)</name>
    <dbReference type="NCBI Taxonomy" id="365044"/>
    <lineage>
        <taxon>Bacteria</taxon>
        <taxon>Pseudomonadati</taxon>
        <taxon>Pseudomonadota</taxon>
        <taxon>Betaproteobacteria</taxon>
        <taxon>Burkholderiales</taxon>
        <taxon>Comamonadaceae</taxon>
        <taxon>Polaromonas</taxon>
    </lineage>
</organism>
<protein>
    <recommendedName>
        <fullName evidence="1">Glycerol kinase</fullName>
        <ecNumber evidence="1">2.7.1.30</ecNumber>
    </recommendedName>
    <alternativeName>
        <fullName evidence="1">ATP:glycerol 3-phosphotransferase</fullName>
    </alternativeName>
    <alternativeName>
        <fullName evidence="1">Glycerokinase</fullName>
        <shortName evidence="1">GK</shortName>
    </alternativeName>
</protein>
<feature type="chain" id="PRO_1000098748" description="Glycerol kinase">
    <location>
        <begin position="1"/>
        <end position="497"/>
    </location>
</feature>
<feature type="binding site" evidence="1">
    <location>
        <position position="11"/>
    </location>
    <ligand>
        <name>ADP</name>
        <dbReference type="ChEBI" id="CHEBI:456216"/>
    </ligand>
</feature>
<feature type="binding site" evidence="1">
    <location>
        <position position="11"/>
    </location>
    <ligand>
        <name>ATP</name>
        <dbReference type="ChEBI" id="CHEBI:30616"/>
    </ligand>
</feature>
<feature type="binding site" evidence="1">
    <location>
        <position position="11"/>
    </location>
    <ligand>
        <name>sn-glycerol 3-phosphate</name>
        <dbReference type="ChEBI" id="CHEBI:57597"/>
    </ligand>
</feature>
<feature type="binding site" evidence="1">
    <location>
        <position position="12"/>
    </location>
    <ligand>
        <name>ATP</name>
        <dbReference type="ChEBI" id="CHEBI:30616"/>
    </ligand>
</feature>
<feature type="binding site" evidence="1">
    <location>
        <position position="13"/>
    </location>
    <ligand>
        <name>ATP</name>
        <dbReference type="ChEBI" id="CHEBI:30616"/>
    </ligand>
</feature>
<feature type="binding site" evidence="1">
    <location>
        <position position="15"/>
    </location>
    <ligand>
        <name>ADP</name>
        <dbReference type="ChEBI" id="CHEBI:456216"/>
    </ligand>
</feature>
<feature type="binding site" evidence="1">
    <location>
        <position position="81"/>
    </location>
    <ligand>
        <name>glycerol</name>
        <dbReference type="ChEBI" id="CHEBI:17754"/>
    </ligand>
</feature>
<feature type="binding site" evidence="1">
    <location>
        <position position="81"/>
    </location>
    <ligand>
        <name>sn-glycerol 3-phosphate</name>
        <dbReference type="ChEBI" id="CHEBI:57597"/>
    </ligand>
</feature>
<feature type="binding site" evidence="1">
    <location>
        <position position="82"/>
    </location>
    <ligand>
        <name>glycerol</name>
        <dbReference type="ChEBI" id="CHEBI:17754"/>
    </ligand>
</feature>
<feature type="binding site" evidence="1">
    <location>
        <position position="82"/>
    </location>
    <ligand>
        <name>sn-glycerol 3-phosphate</name>
        <dbReference type="ChEBI" id="CHEBI:57597"/>
    </ligand>
</feature>
<feature type="binding site" evidence="1">
    <location>
        <position position="133"/>
    </location>
    <ligand>
        <name>glycerol</name>
        <dbReference type="ChEBI" id="CHEBI:17754"/>
    </ligand>
</feature>
<feature type="binding site" evidence="1">
    <location>
        <position position="133"/>
    </location>
    <ligand>
        <name>sn-glycerol 3-phosphate</name>
        <dbReference type="ChEBI" id="CHEBI:57597"/>
    </ligand>
</feature>
<feature type="binding site" evidence="1">
    <location>
        <position position="242"/>
    </location>
    <ligand>
        <name>glycerol</name>
        <dbReference type="ChEBI" id="CHEBI:17754"/>
    </ligand>
</feature>
<feature type="binding site" evidence="1">
    <location>
        <position position="242"/>
    </location>
    <ligand>
        <name>sn-glycerol 3-phosphate</name>
        <dbReference type="ChEBI" id="CHEBI:57597"/>
    </ligand>
</feature>
<feature type="binding site" evidence="1">
    <location>
        <position position="243"/>
    </location>
    <ligand>
        <name>glycerol</name>
        <dbReference type="ChEBI" id="CHEBI:17754"/>
    </ligand>
</feature>
<feature type="binding site" evidence="1">
    <location>
        <position position="264"/>
    </location>
    <ligand>
        <name>ADP</name>
        <dbReference type="ChEBI" id="CHEBI:456216"/>
    </ligand>
</feature>
<feature type="binding site" evidence="1">
    <location>
        <position position="264"/>
    </location>
    <ligand>
        <name>ATP</name>
        <dbReference type="ChEBI" id="CHEBI:30616"/>
    </ligand>
</feature>
<feature type="binding site" evidence="1">
    <location>
        <position position="307"/>
    </location>
    <ligand>
        <name>ADP</name>
        <dbReference type="ChEBI" id="CHEBI:456216"/>
    </ligand>
</feature>
<feature type="binding site" evidence="1">
    <location>
        <position position="307"/>
    </location>
    <ligand>
        <name>ATP</name>
        <dbReference type="ChEBI" id="CHEBI:30616"/>
    </ligand>
</feature>
<feature type="binding site" evidence="1">
    <location>
        <position position="311"/>
    </location>
    <ligand>
        <name>ATP</name>
        <dbReference type="ChEBI" id="CHEBI:30616"/>
    </ligand>
</feature>
<feature type="binding site" evidence="1">
    <location>
        <position position="412"/>
    </location>
    <ligand>
        <name>ADP</name>
        <dbReference type="ChEBI" id="CHEBI:456216"/>
    </ligand>
</feature>
<feature type="binding site" evidence="1">
    <location>
        <position position="412"/>
    </location>
    <ligand>
        <name>ATP</name>
        <dbReference type="ChEBI" id="CHEBI:30616"/>
    </ligand>
</feature>
<feature type="binding site" evidence="1">
    <location>
        <position position="416"/>
    </location>
    <ligand>
        <name>ADP</name>
        <dbReference type="ChEBI" id="CHEBI:456216"/>
    </ligand>
</feature>
<gene>
    <name evidence="1" type="primary">glpK</name>
    <name type="ordered locus">Pnap_0328</name>
</gene>
<dbReference type="EC" id="2.7.1.30" evidence="1"/>
<dbReference type="EMBL" id="CP000529">
    <property type="protein sequence ID" value="ABM35651.1"/>
    <property type="molecule type" value="Genomic_DNA"/>
</dbReference>
<dbReference type="RefSeq" id="WP_011799758.1">
    <property type="nucleotide sequence ID" value="NC_008781.1"/>
</dbReference>
<dbReference type="SMR" id="A1VJ23"/>
<dbReference type="STRING" id="365044.Pnap_0328"/>
<dbReference type="KEGG" id="pna:Pnap_0328"/>
<dbReference type="eggNOG" id="COG0554">
    <property type="taxonomic scope" value="Bacteria"/>
</dbReference>
<dbReference type="HOGENOM" id="CLU_009281_2_3_4"/>
<dbReference type="OrthoDB" id="9805576at2"/>
<dbReference type="UniPathway" id="UPA00618">
    <property type="reaction ID" value="UER00672"/>
</dbReference>
<dbReference type="Proteomes" id="UP000000644">
    <property type="component" value="Chromosome"/>
</dbReference>
<dbReference type="GO" id="GO:0005829">
    <property type="term" value="C:cytosol"/>
    <property type="evidence" value="ECO:0007669"/>
    <property type="project" value="TreeGrafter"/>
</dbReference>
<dbReference type="GO" id="GO:0005524">
    <property type="term" value="F:ATP binding"/>
    <property type="evidence" value="ECO:0007669"/>
    <property type="project" value="UniProtKB-UniRule"/>
</dbReference>
<dbReference type="GO" id="GO:0004370">
    <property type="term" value="F:glycerol kinase activity"/>
    <property type="evidence" value="ECO:0000250"/>
    <property type="project" value="UniProtKB"/>
</dbReference>
<dbReference type="GO" id="GO:0019563">
    <property type="term" value="P:glycerol catabolic process"/>
    <property type="evidence" value="ECO:0007669"/>
    <property type="project" value="UniProtKB-UniRule"/>
</dbReference>
<dbReference type="GO" id="GO:0006071">
    <property type="term" value="P:glycerol metabolic process"/>
    <property type="evidence" value="ECO:0000250"/>
    <property type="project" value="UniProtKB"/>
</dbReference>
<dbReference type="GO" id="GO:0006072">
    <property type="term" value="P:glycerol-3-phosphate metabolic process"/>
    <property type="evidence" value="ECO:0007669"/>
    <property type="project" value="InterPro"/>
</dbReference>
<dbReference type="CDD" id="cd07786">
    <property type="entry name" value="FGGY_EcGK_like"/>
    <property type="match status" value="1"/>
</dbReference>
<dbReference type="FunFam" id="3.30.420.40:FF:000007">
    <property type="entry name" value="Glycerol kinase"/>
    <property type="match status" value="1"/>
</dbReference>
<dbReference type="FunFam" id="3.30.420.40:FF:000008">
    <property type="entry name" value="Glycerol kinase"/>
    <property type="match status" value="1"/>
</dbReference>
<dbReference type="Gene3D" id="3.30.420.40">
    <property type="match status" value="2"/>
</dbReference>
<dbReference type="HAMAP" id="MF_00186">
    <property type="entry name" value="Glycerol_kin"/>
    <property type="match status" value="1"/>
</dbReference>
<dbReference type="InterPro" id="IPR043129">
    <property type="entry name" value="ATPase_NBD"/>
</dbReference>
<dbReference type="InterPro" id="IPR000577">
    <property type="entry name" value="Carb_kinase_FGGY"/>
</dbReference>
<dbReference type="InterPro" id="IPR018483">
    <property type="entry name" value="Carb_kinase_FGGY_CS"/>
</dbReference>
<dbReference type="InterPro" id="IPR018485">
    <property type="entry name" value="FGGY_C"/>
</dbReference>
<dbReference type="InterPro" id="IPR018484">
    <property type="entry name" value="FGGY_N"/>
</dbReference>
<dbReference type="InterPro" id="IPR005999">
    <property type="entry name" value="Glycerol_kin"/>
</dbReference>
<dbReference type="NCBIfam" id="TIGR01311">
    <property type="entry name" value="glycerol_kin"/>
    <property type="match status" value="1"/>
</dbReference>
<dbReference type="NCBIfam" id="NF000756">
    <property type="entry name" value="PRK00047.1"/>
    <property type="match status" value="1"/>
</dbReference>
<dbReference type="PANTHER" id="PTHR10196:SF69">
    <property type="entry name" value="GLYCEROL KINASE"/>
    <property type="match status" value="1"/>
</dbReference>
<dbReference type="PANTHER" id="PTHR10196">
    <property type="entry name" value="SUGAR KINASE"/>
    <property type="match status" value="1"/>
</dbReference>
<dbReference type="Pfam" id="PF02782">
    <property type="entry name" value="FGGY_C"/>
    <property type="match status" value="1"/>
</dbReference>
<dbReference type="Pfam" id="PF00370">
    <property type="entry name" value="FGGY_N"/>
    <property type="match status" value="1"/>
</dbReference>
<dbReference type="PIRSF" id="PIRSF000538">
    <property type="entry name" value="GlpK"/>
    <property type="match status" value="1"/>
</dbReference>
<dbReference type="SUPFAM" id="SSF53067">
    <property type="entry name" value="Actin-like ATPase domain"/>
    <property type="match status" value="2"/>
</dbReference>
<dbReference type="PROSITE" id="PS00933">
    <property type="entry name" value="FGGY_KINASES_1"/>
    <property type="match status" value="1"/>
</dbReference>
<dbReference type="PROSITE" id="PS00445">
    <property type="entry name" value="FGGY_KINASES_2"/>
    <property type="match status" value="1"/>
</dbReference>
<reference key="1">
    <citation type="journal article" date="2009" name="Environ. Microbiol.">
        <title>The genome of Polaromonas naphthalenivorans strain CJ2, isolated from coal tar-contaminated sediment, reveals physiological and metabolic versatility and evolution through extensive horizontal gene transfer.</title>
        <authorList>
            <person name="Yagi J.M."/>
            <person name="Sims D."/>
            <person name="Brettin T."/>
            <person name="Bruce D."/>
            <person name="Madsen E.L."/>
        </authorList>
    </citation>
    <scope>NUCLEOTIDE SEQUENCE [LARGE SCALE GENOMIC DNA]</scope>
    <source>
        <strain>CJ2</strain>
    </source>
</reference>
<sequence>MAYLLALDQGTSSSRSIVFDEEGRVVALAQRELPQIYPRPGWVEHDPMEIWRGQLATARQALASVGLAAWDIRAMGITNQRETTVLWNRRTGQPVHHAIVWQDRRAESTCAQLREQGHEALIQAKTGLLIDAYFSGTKLKWLLDNVAGVRAQAERGELAFGTIDSWLIWQLTGGTVHATDVSNASRTMLFNVRTNQWDAELLDLLGIPASLMPEVKPSSAHYGEVRPELLGHAIPIGGVAGDQQSALFGQACFRAGMAKNTYGTGCFLLMHTGAQFQASKNGLLTTSAAQTTAQTEFALEGSVFVGGAVVQWLRDGLHAIQGSAEVEALAQSVPDSGGVMMVPAFTGLGAPYWKPEARGTITGLTRGTTMAHIARAALESIAYQSAALLLAMSRDAVAAGAAPLAELRVDGGASSNDLLMQFQADLLGIPVIRPAVTETTALGAAWLAGLSSGVYGSTDELSSLWRAERTFLPTLSTGRAAELMAQWEHAVRQTVLA</sequence>
<name>GLPK_POLNA</name>
<comment type="function">
    <text evidence="1">Key enzyme in the regulation of glycerol uptake and metabolism. Catalyzes the phosphorylation of glycerol to yield sn-glycerol 3-phosphate.</text>
</comment>
<comment type="catalytic activity">
    <reaction evidence="1">
        <text>glycerol + ATP = sn-glycerol 3-phosphate + ADP + H(+)</text>
        <dbReference type="Rhea" id="RHEA:21644"/>
        <dbReference type="ChEBI" id="CHEBI:15378"/>
        <dbReference type="ChEBI" id="CHEBI:17754"/>
        <dbReference type="ChEBI" id="CHEBI:30616"/>
        <dbReference type="ChEBI" id="CHEBI:57597"/>
        <dbReference type="ChEBI" id="CHEBI:456216"/>
        <dbReference type="EC" id="2.7.1.30"/>
    </reaction>
</comment>
<comment type="activity regulation">
    <text evidence="1">Inhibited by fructose 1,6-bisphosphate (FBP).</text>
</comment>
<comment type="pathway">
    <text evidence="1">Polyol metabolism; glycerol degradation via glycerol kinase pathway; sn-glycerol 3-phosphate from glycerol: step 1/1.</text>
</comment>
<comment type="similarity">
    <text evidence="1">Belongs to the FGGY kinase family.</text>
</comment>